<sequence length="245" mass="28141">MGQKSNPNGLRLGIIKNWDSKWFANFKKTPQFIHEDFCIRNFINKNYSKALIAQIEIERSKKKDKEIIKINLHVAKSNIINGKDNESLKKITKQIEQITKKEVFFNVIEIKNPDKVAILVAKTMAEQLEQRFYFRRVQKMAIQKVLKTGVKGVKTLISGRLGGLEMARSEGYLEGRVPLNTLRADVEYAFTEAHTTYGSFGVKVWIFHGDVLPGETILDTRKPFAIKSNYISKNNKKSNNYKGDK</sequence>
<accession>B3QZZ7</accession>
<comment type="function">
    <text evidence="1">Binds the lower part of the 30S subunit head. Binds mRNA in the 70S ribosome, positioning it for translation.</text>
</comment>
<comment type="subunit">
    <text evidence="1">Part of the 30S ribosomal subunit. Forms a tight complex with proteins S10 and S14.</text>
</comment>
<comment type="similarity">
    <text evidence="1">Belongs to the universal ribosomal protein uS3 family.</text>
</comment>
<dbReference type="EMBL" id="CU469464">
    <property type="protein sequence ID" value="CAP18534.1"/>
    <property type="molecule type" value="Genomic_DNA"/>
</dbReference>
<dbReference type="SMR" id="B3QZZ7"/>
<dbReference type="STRING" id="37692.ATP_00347"/>
<dbReference type="KEGG" id="pml:ATP_00347"/>
<dbReference type="eggNOG" id="COG0092">
    <property type="taxonomic scope" value="Bacteria"/>
</dbReference>
<dbReference type="HOGENOM" id="CLU_058591_0_2_14"/>
<dbReference type="Proteomes" id="UP000002020">
    <property type="component" value="Chromosome"/>
</dbReference>
<dbReference type="GO" id="GO:0022627">
    <property type="term" value="C:cytosolic small ribosomal subunit"/>
    <property type="evidence" value="ECO:0007669"/>
    <property type="project" value="TreeGrafter"/>
</dbReference>
<dbReference type="GO" id="GO:0003729">
    <property type="term" value="F:mRNA binding"/>
    <property type="evidence" value="ECO:0007669"/>
    <property type="project" value="UniProtKB-UniRule"/>
</dbReference>
<dbReference type="GO" id="GO:0019843">
    <property type="term" value="F:rRNA binding"/>
    <property type="evidence" value="ECO:0007669"/>
    <property type="project" value="UniProtKB-UniRule"/>
</dbReference>
<dbReference type="GO" id="GO:0003735">
    <property type="term" value="F:structural constituent of ribosome"/>
    <property type="evidence" value="ECO:0007669"/>
    <property type="project" value="InterPro"/>
</dbReference>
<dbReference type="GO" id="GO:0006412">
    <property type="term" value="P:translation"/>
    <property type="evidence" value="ECO:0007669"/>
    <property type="project" value="UniProtKB-UniRule"/>
</dbReference>
<dbReference type="CDD" id="cd02412">
    <property type="entry name" value="KH-II_30S_S3"/>
    <property type="match status" value="1"/>
</dbReference>
<dbReference type="FunFam" id="3.30.300.20:FF:000001">
    <property type="entry name" value="30S ribosomal protein S3"/>
    <property type="match status" value="1"/>
</dbReference>
<dbReference type="Gene3D" id="3.30.300.20">
    <property type="match status" value="1"/>
</dbReference>
<dbReference type="Gene3D" id="3.30.1140.32">
    <property type="entry name" value="Ribosomal protein S3, C-terminal domain"/>
    <property type="match status" value="1"/>
</dbReference>
<dbReference type="HAMAP" id="MF_01309_B">
    <property type="entry name" value="Ribosomal_uS3_B"/>
    <property type="match status" value="1"/>
</dbReference>
<dbReference type="InterPro" id="IPR015946">
    <property type="entry name" value="KH_dom-like_a/b"/>
</dbReference>
<dbReference type="InterPro" id="IPR004044">
    <property type="entry name" value="KH_dom_type_2"/>
</dbReference>
<dbReference type="InterPro" id="IPR009019">
    <property type="entry name" value="KH_sf_prok-type"/>
</dbReference>
<dbReference type="InterPro" id="IPR036419">
    <property type="entry name" value="Ribosomal_S3_C_sf"/>
</dbReference>
<dbReference type="InterPro" id="IPR005704">
    <property type="entry name" value="Ribosomal_uS3_bac-typ"/>
</dbReference>
<dbReference type="InterPro" id="IPR001351">
    <property type="entry name" value="Ribosomal_uS3_C"/>
</dbReference>
<dbReference type="InterPro" id="IPR018280">
    <property type="entry name" value="Ribosomal_uS3_CS"/>
</dbReference>
<dbReference type="NCBIfam" id="TIGR01009">
    <property type="entry name" value="rpsC_bact"/>
    <property type="match status" value="1"/>
</dbReference>
<dbReference type="PANTHER" id="PTHR11760">
    <property type="entry name" value="30S/40S RIBOSOMAL PROTEIN S3"/>
    <property type="match status" value="1"/>
</dbReference>
<dbReference type="PANTHER" id="PTHR11760:SF19">
    <property type="entry name" value="SMALL RIBOSOMAL SUBUNIT PROTEIN US3C"/>
    <property type="match status" value="1"/>
</dbReference>
<dbReference type="Pfam" id="PF07650">
    <property type="entry name" value="KH_2"/>
    <property type="match status" value="1"/>
</dbReference>
<dbReference type="Pfam" id="PF00189">
    <property type="entry name" value="Ribosomal_S3_C"/>
    <property type="match status" value="1"/>
</dbReference>
<dbReference type="SUPFAM" id="SSF54814">
    <property type="entry name" value="Prokaryotic type KH domain (KH-domain type II)"/>
    <property type="match status" value="1"/>
</dbReference>
<dbReference type="SUPFAM" id="SSF54821">
    <property type="entry name" value="Ribosomal protein S3 C-terminal domain"/>
    <property type="match status" value="1"/>
</dbReference>
<dbReference type="PROSITE" id="PS50823">
    <property type="entry name" value="KH_TYPE_2"/>
    <property type="match status" value="1"/>
</dbReference>
<dbReference type="PROSITE" id="PS00548">
    <property type="entry name" value="RIBOSOMAL_S3"/>
    <property type="match status" value="1"/>
</dbReference>
<reference key="1">
    <citation type="journal article" date="2008" name="BMC Genomics">
        <title>The linear chromosome of the plant-pathogenic mycoplasma 'Candidatus Phytoplasma mali'.</title>
        <authorList>
            <person name="Kube M."/>
            <person name="Schneider B."/>
            <person name="Kuhl H."/>
            <person name="Dandekar T."/>
            <person name="Heitmann K."/>
            <person name="Migdoll A.M."/>
            <person name="Reinhardt R."/>
            <person name="Seemueller E."/>
        </authorList>
    </citation>
    <scope>NUCLEOTIDE SEQUENCE [LARGE SCALE GENOMIC DNA]</scope>
    <source>
        <strain>AT</strain>
    </source>
</reference>
<keyword id="KW-1185">Reference proteome</keyword>
<keyword id="KW-0687">Ribonucleoprotein</keyword>
<keyword id="KW-0689">Ribosomal protein</keyword>
<keyword id="KW-0694">RNA-binding</keyword>
<keyword id="KW-0699">rRNA-binding</keyword>
<evidence type="ECO:0000255" key="1">
    <source>
        <dbReference type="HAMAP-Rule" id="MF_01309"/>
    </source>
</evidence>
<evidence type="ECO:0000305" key="2"/>
<gene>
    <name evidence="1" type="primary">rpsC</name>
    <name type="ordered locus">ATP_00347</name>
</gene>
<organism>
    <name type="scientific">Phytoplasma mali (strain AT)</name>
    <dbReference type="NCBI Taxonomy" id="482235"/>
    <lineage>
        <taxon>Bacteria</taxon>
        <taxon>Bacillati</taxon>
        <taxon>Mycoplasmatota</taxon>
        <taxon>Mollicutes</taxon>
        <taxon>Acholeplasmatales</taxon>
        <taxon>Acholeplasmataceae</taxon>
        <taxon>Candidatus Phytoplasma</taxon>
        <taxon>16SrX (Apple proliferation group)</taxon>
    </lineage>
</organism>
<proteinExistence type="inferred from homology"/>
<name>RS3_PHYMT</name>
<feature type="chain" id="PRO_1000165505" description="Small ribosomal subunit protein uS3">
    <location>
        <begin position="1"/>
        <end position="245"/>
    </location>
</feature>
<feature type="domain" description="KH type-2" evidence="1">
    <location>
        <begin position="39"/>
        <end position="111"/>
    </location>
</feature>
<protein>
    <recommendedName>
        <fullName evidence="1">Small ribosomal subunit protein uS3</fullName>
    </recommendedName>
    <alternativeName>
        <fullName evidence="2">30S ribosomal protein S3</fullName>
    </alternativeName>
</protein>